<accession>Q57RN0</accession>
<proteinExistence type="inferred from homology"/>
<feature type="chain" id="PRO_1000022444" description="Potassium-transporting ATPase ATP-binding subunit">
    <location>
        <begin position="1"/>
        <end position="682"/>
    </location>
</feature>
<feature type="transmembrane region" description="Helical" evidence="1">
    <location>
        <begin position="34"/>
        <end position="54"/>
    </location>
</feature>
<feature type="transmembrane region" description="Helical" evidence="1">
    <location>
        <begin position="58"/>
        <end position="78"/>
    </location>
</feature>
<feature type="transmembrane region" description="Helical" evidence="1">
    <location>
        <begin position="219"/>
        <end position="239"/>
    </location>
</feature>
<feature type="transmembrane region" description="Helical" evidence="1">
    <location>
        <begin position="254"/>
        <end position="274"/>
    </location>
</feature>
<feature type="transmembrane region" description="Helical" evidence="1">
    <location>
        <begin position="588"/>
        <end position="608"/>
    </location>
</feature>
<feature type="transmembrane region" description="Helical" evidence="1">
    <location>
        <begin position="616"/>
        <end position="636"/>
    </location>
</feature>
<feature type="transmembrane region" description="Helical" evidence="1">
    <location>
        <begin position="662"/>
        <end position="682"/>
    </location>
</feature>
<feature type="active site" description="4-aspartylphosphate intermediate" evidence="1">
    <location>
        <position position="307"/>
    </location>
</feature>
<feature type="binding site" evidence="1">
    <location>
        <position position="344"/>
    </location>
    <ligand>
        <name>ATP</name>
        <dbReference type="ChEBI" id="CHEBI:30616"/>
    </ligand>
</feature>
<feature type="binding site" evidence="1">
    <location>
        <position position="348"/>
    </location>
    <ligand>
        <name>ATP</name>
        <dbReference type="ChEBI" id="CHEBI:30616"/>
    </ligand>
</feature>
<feature type="binding site" evidence="1">
    <location>
        <begin position="377"/>
        <end position="384"/>
    </location>
    <ligand>
        <name>ATP</name>
        <dbReference type="ChEBI" id="CHEBI:30616"/>
    </ligand>
</feature>
<feature type="binding site" evidence="1">
    <location>
        <position position="395"/>
    </location>
    <ligand>
        <name>ATP</name>
        <dbReference type="ChEBI" id="CHEBI:30616"/>
    </ligand>
</feature>
<feature type="binding site" evidence="1">
    <location>
        <position position="518"/>
    </location>
    <ligand>
        <name>Mg(2+)</name>
        <dbReference type="ChEBI" id="CHEBI:18420"/>
    </ligand>
</feature>
<feature type="binding site" evidence="1">
    <location>
        <position position="522"/>
    </location>
    <ligand>
        <name>Mg(2+)</name>
        <dbReference type="ChEBI" id="CHEBI:18420"/>
    </ligand>
</feature>
<dbReference type="EC" id="7.2.2.6" evidence="1"/>
<dbReference type="EMBL" id="AE017220">
    <property type="protein sequence ID" value="AAX64631.1"/>
    <property type="molecule type" value="Genomic_DNA"/>
</dbReference>
<dbReference type="RefSeq" id="WP_011264224.1">
    <property type="nucleotide sequence ID" value="NC_006905.1"/>
</dbReference>
<dbReference type="SMR" id="Q57RN0"/>
<dbReference type="KEGG" id="sec:SCH_0725"/>
<dbReference type="HOGENOM" id="CLU_025728_2_0_6"/>
<dbReference type="Proteomes" id="UP000000538">
    <property type="component" value="Chromosome"/>
</dbReference>
<dbReference type="GO" id="GO:0005886">
    <property type="term" value="C:plasma membrane"/>
    <property type="evidence" value="ECO:0007669"/>
    <property type="project" value="UniProtKB-SubCell"/>
</dbReference>
<dbReference type="GO" id="GO:0005524">
    <property type="term" value="F:ATP binding"/>
    <property type="evidence" value="ECO:0007669"/>
    <property type="project" value="UniProtKB-UniRule"/>
</dbReference>
<dbReference type="GO" id="GO:0016887">
    <property type="term" value="F:ATP hydrolysis activity"/>
    <property type="evidence" value="ECO:0007669"/>
    <property type="project" value="InterPro"/>
</dbReference>
<dbReference type="GO" id="GO:0000287">
    <property type="term" value="F:magnesium ion binding"/>
    <property type="evidence" value="ECO:0007669"/>
    <property type="project" value="UniProtKB-UniRule"/>
</dbReference>
<dbReference type="GO" id="GO:0008556">
    <property type="term" value="F:P-type potassium transmembrane transporter activity"/>
    <property type="evidence" value="ECO:0007669"/>
    <property type="project" value="UniProtKB-UniRule"/>
</dbReference>
<dbReference type="CDD" id="cd02078">
    <property type="entry name" value="P-type_ATPase_K"/>
    <property type="match status" value="1"/>
</dbReference>
<dbReference type="FunFam" id="2.70.150.10:FF:000010">
    <property type="entry name" value="Potassium-transporting ATPase ATP-binding subunit"/>
    <property type="match status" value="1"/>
</dbReference>
<dbReference type="FunFam" id="3.40.1110.10:FF:000007">
    <property type="entry name" value="Potassium-transporting ATPase ATP-binding subunit"/>
    <property type="match status" value="1"/>
</dbReference>
<dbReference type="Gene3D" id="3.40.1110.10">
    <property type="entry name" value="Calcium-transporting ATPase, cytoplasmic domain N"/>
    <property type="match status" value="1"/>
</dbReference>
<dbReference type="Gene3D" id="2.70.150.10">
    <property type="entry name" value="Calcium-transporting ATPase, cytoplasmic transduction domain A"/>
    <property type="match status" value="1"/>
</dbReference>
<dbReference type="Gene3D" id="3.40.50.1000">
    <property type="entry name" value="HAD superfamily/HAD-like"/>
    <property type="match status" value="1"/>
</dbReference>
<dbReference type="HAMAP" id="MF_00285">
    <property type="entry name" value="KdpB"/>
    <property type="match status" value="1"/>
</dbReference>
<dbReference type="InterPro" id="IPR023299">
    <property type="entry name" value="ATPase_P-typ_cyto_dom_N"/>
</dbReference>
<dbReference type="InterPro" id="IPR018303">
    <property type="entry name" value="ATPase_P-typ_P_site"/>
</dbReference>
<dbReference type="InterPro" id="IPR023298">
    <property type="entry name" value="ATPase_P-typ_TM_dom_sf"/>
</dbReference>
<dbReference type="InterPro" id="IPR008250">
    <property type="entry name" value="ATPase_P-typ_transduc_dom_A_sf"/>
</dbReference>
<dbReference type="InterPro" id="IPR036412">
    <property type="entry name" value="HAD-like_sf"/>
</dbReference>
<dbReference type="InterPro" id="IPR023214">
    <property type="entry name" value="HAD_sf"/>
</dbReference>
<dbReference type="InterPro" id="IPR006391">
    <property type="entry name" value="P-type_ATPase_bsu_IA"/>
</dbReference>
<dbReference type="InterPro" id="IPR001757">
    <property type="entry name" value="P_typ_ATPase"/>
</dbReference>
<dbReference type="InterPro" id="IPR044492">
    <property type="entry name" value="P_typ_ATPase_HD_dom"/>
</dbReference>
<dbReference type="NCBIfam" id="TIGR01494">
    <property type="entry name" value="ATPase_P-type"/>
    <property type="match status" value="2"/>
</dbReference>
<dbReference type="NCBIfam" id="TIGR01497">
    <property type="entry name" value="kdpB"/>
    <property type="match status" value="1"/>
</dbReference>
<dbReference type="PANTHER" id="PTHR43743">
    <property type="entry name" value="POTASSIUM-TRANSPORTING ATPASE ATP-BINDING SUBUNIT"/>
    <property type="match status" value="1"/>
</dbReference>
<dbReference type="PANTHER" id="PTHR43743:SF1">
    <property type="entry name" value="POTASSIUM-TRANSPORTING ATPASE ATP-BINDING SUBUNIT"/>
    <property type="match status" value="1"/>
</dbReference>
<dbReference type="Pfam" id="PF00122">
    <property type="entry name" value="E1-E2_ATPase"/>
    <property type="match status" value="1"/>
</dbReference>
<dbReference type="Pfam" id="PF00702">
    <property type="entry name" value="Hydrolase"/>
    <property type="match status" value="1"/>
</dbReference>
<dbReference type="PRINTS" id="PR00119">
    <property type="entry name" value="CATATPASE"/>
</dbReference>
<dbReference type="SFLD" id="SFLDG00002">
    <property type="entry name" value="C1.7:_P-type_atpase_like"/>
    <property type="match status" value="1"/>
</dbReference>
<dbReference type="SFLD" id="SFLDF00027">
    <property type="entry name" value="p-type_atpase"/>
    <property type="match status" value="1"/>
</dbReference>
<dbReference type="SUPFAM" id="SSF81653">
    <property type="entry name" value="Calcium ATPase, transduction domain A"/>
    <property type="match status" value="1"/>
</dbReference>
<dbReference type="SUPFAM" id="SSF81665">
    <property type="entry name" value="Calcium ATPase, transmembrane domain M"/>
    <property type="match status" value="1"/>
</dbReference>
<dbReference type="SUPFAM" id="SSF56784">
    <property type="entry name" value="HAD-like"/>
    <property type="match status" value="1"/>
</dbReference>
<dbReference type="SUPFAM" id="SSF81660">
    <property type="entry name" value="Metal cation-transporting ATPase, ATP-binding domain N"/>
    <property type="match status" value="1"/>
</dbReference>
<dbReference type="PROSITE" id="PS00154">
    <property type="entry name" value="ATPASE_E1_E2"/>
    <property type="match status" value="1"/>
</dbReference>
<organism>
    <name type="scientific">Salmonella choleraesuis (strain SC-B67)</name>
    <dbReference type="NCBI Taxonomy" id="321314"/>
    <lineage>
        <taxon>Bacteria</taxon>
        <taxon>Pseudomonadati</taxon>
        <taxon>Pseudomonadota</taxon>
        <taxon>Gammaproteobacteria</taxon>
        <taxon>Enterobacterales</taxon>
        <taxon>Enterobacteriaceae</taxon>
        <taxon>Salmonella</taxon>
    </lineage>
</organism>
<evidence type="ECO:0000255" key="1">
    <source>
        <dbReference type="HAMAP-Rule" id="MF_00285"/>
    </source>
</evidence>
<protein>
    <recommendedName>
        <fullName evidence="1">Potassium-transporting ATPase ATP-binding subunit</fullName>
        <ecNumber evidence="1">7.2.2.6</ecNumber>
    </recommendedName>
    <alternativeName>
        <fullName evidence="1">ATP phosphohydrolase [potassium-transporting] B chain</fullName>
    </alternativeName>
    <alternativeName>
        <fullName evidence="1">Potassium-binding and translocating subunit B</fullName>
    </alternativeName>
    <alternativeName>
        <fullName evidence="1">Potassium-translocating ATPase B chain</fullName>
    </alternativeName>
</protein>
<reference key="1">
    <citation type="journal article" date="2005" name="Nucleic Acids Res.">
        <title>The genome sequence of Salmonella enterica serovar Choleraesuis, a highly invasive and resistant zoonotic pathogen.</title>
        <authorList>
            <person name="Chiu C.-H."/>
            <person name="Tang P."/>
            <person name="Chu C."/>
            <person name="Hu S."/>
            <person name="Bao Q."/>
            <person name="Yu J."/>
            <person name="Chou Y.-Y."/>
            <person name="Wang H.-S."/>
            <person name="Lee Y.-S."/>
        </authorList>
    </citation>
    <scope>NUCLEOTIDE SEQUENCE [LARGE SCALE GENOMIC DNA]</scope>
    <source>
        <strain>SC-B67</strain>
    </source>
</reference>
<sequence>MSRKQLALFEPVLLVQALTDAVKKLSPRAQWRNPVMFVVWASSVLTTLLTLAMVTGQIAGSALFTGVISLWLWFTVLFANFAEALAEGRSKAQANSLKGVKKTAFARRLRAPRHDAQADNVPAAELRKGDIVLVKAGDIIPCDGEVIEGGASVDESAITGESAPVIRESGGDFASVTGGTRILSDWLVIACSVNPGETFLDRMIAMVEGAQRRKTPNEIALTILLIALTIVFLLATATLWPFSAWGGNAVSVTVLVALLVCLIPTTIGGLLSAIGVAGMSRMLGANVIATSGRAVEAAGDVDVLLLDKTGTITLGNRQASDFIPARGVDERTLADAAQLASLADETPEGRSIVILAKQRFNLRERDVQSLHATFVPFTAQSRMSGINIDNRMIRKGSVDAIRRHVESNGGHFPADVEQNVENVARLGATPLVVVEGARVLGVIALKDIVKGGIKERFAQLRKMGIKTVMITGDNRLTAEAFAAEAGVDDFLAEATPEAKLALIRQYQAEGRLVAMTGDGTNDAPALAQADVAVAMNSGTQAAKEAGNMVDLDSNPTKLIEVVHIGKQMLMTRGSLTTFSIANDVAKYFAIIPAAFAATYPQLNALNVMGLHSPNSAILSAVIFNALIIIFLIPLALKGVSYKPLSASAMLRRNLWIYGLGGLVVPFIGIKVIDVLLTLLGLA</sequence>
<gene>
    <name evidence="1" type="primary">kdpB</name>
    <name type="ordered locus">SCH_0725</name>
</gene>
<name>KDPB_SALCH</name>
<keyword id="KW-0067">ATP-binding</keyword>
<keyword id="KW-0997">Cell inner membrane</keyword>
<keyword id="KW-1003">Cell membrane</keyword>
<keyword id="KW-0406">Ion transport</keyword>
<keyword id="KW-0460">Magnesium</keyword>
<keyword id="KW-0472">Membrane</keyword>
<keyword id="KW-0479">Metal-binding</keyword>
<keyword id="KW-0547">Nucleotide-binding</keyword>
<keyword id="KW-0597">Phosphoprotein</keyword>
<keyword id="KW-0630">Potassium</keyword>
<keyword id="KW-0633">Potassium transport</keyword>
<keyword id="KW-1278">Translocase</keyword>
<keyword id="KW-0812">Transmembrane</keyword>
<keyword id="KW-1133">Transmembrane helix</keyword>
<keyword id="KW-0813">Transport</keyword>
<comment type="function">
    <text evidence="1">Part of the high-affinity ATP-driven potassium transport (or Kdp) system, which catalyzes the hydrolysis of ATP coupled with the electrogenic transport of potassium into the cytoplasm. This subunit is responsible for energy coupling to the transport system and for the release of the potassium ions to the cytoplasm.</text>
</comment>
<comment type="catalytic activity">
    <reaction evidence="1">
        <text>K(+)(out) + ATP + H2O = K(+)(in) + ADP + phosphate + H(+)</text>
        <dbReference type="Rhea" id="RHEA:16777"/>
        <dbReference type="ChEBI" id="CHEBI:15377"/>
        <dbReference type="ChEBI" id="CHEBI:15378"/>
        <dbReference type="ChEBI" id="CHEBI:29103"/>
        <dbReference type="ChEBI" id="CHEBI:30616"/>
        <dbReference type="ChEBI" id="CHEBI:43474"/>
        <dbReference type="ChEBI" id="CHEBI:456216"/>
        <dbReference type="EC" id="7.2.2.6"/>
    </reaction>
    <physiologicalReaction direction="left-to-right" evidence="1">
        <dbReference type="Rhea" id="RHEA:16778"/>
    </physiologicalReaction>
</comment>
<comment type="subunit">
    <text evidence="1">The system is composed of three essential subunits: KdpA, KdpB and KdpC.</text>
</comment>
<comment type="subcellular location">
    <subcellularLocation>
        <location evidence="1">Cell inner membrane</location>
        <topology evidence="1">Multi-pass membrane protein</topology>
    </subcellularLocation>
</comment>
<comment type="similarity">
    <text evidence="1">Belongs to the cation transport ATPase (P-type) (TC 3.A.3) family. Type IA subfamily.</text>
</comment>